<sequence>MKVRPSVKPICEYCKVIRRNGRVMVICPTNPKHKQRQG</sequence>
<feature type="chain" id="PRO_0000126273" description="Large ribosomal subunit protein bL36">
    <location>
        <begin position="1"/>
        <end position="38"/>
    </location>
</feature>
<keyword id="KW-0687">Ribonucleoprotein</keyword>
<keyword id="KW-0689">Ribosomal protein</keyword>
<accession>P66305</accession>
<accession>Q9A1V2</accession>
<comment type="similarity">
    <text evidence="1">Belongs to the bacterial ribosomal protein bL36 family.</text>
</comment>
<gene>
    <name evidence="1" type="primary">rpmJ</name>
    <name type="ordered locus">spyM18_0076</name>
</gene>
<evidence type="ECO:0000255" key="1">
    <source>
        <dbReference type="HAMAP-Rule" id="MF_00251"/>
    </source>
</evidence>
<evidence type="ECO:0000305" key="2"/>
<reference key="1">
    <citation type="journal article" date="2002" name="Proc. Natl. Acad. Sci. U.S.A.">
        <title>Genome sequence and comparative microarray analysis of serotype M18 group A Streptococcus strains associated with acute rheumatic fever outbreaks.</title>
        <authorList>
            <person name="Smoot J.C."/>
            <person name="Barbian K.D."/>
            <person name="Van Gompel J.J."/>
            <person name="Smoot L.M."/>
            <person name="Chaussee M.S."/>
            <person name="Sylva G.L."/>
            <person name="Sturdevant D.E."/>
            <person name="Ricklefs S.M."/>
            <person name="Porcella S.F."/>
            <person name="Parkins L.D."/>
            <person name="Beres S.B."/>
            <person name="Campbell D.S."/>
            <person name="Smith T.M."/>
            <person name="Zhang Q."/>
            <person name="Kapur V."/>
            <person name="Daly J.A."/>
            <person name="Veasy L.G."/>
            <person name="Musser J.M."/>
        </authorList>
    </citation>
    <scope>NUCLEOTIDE SEQUENCE [LARGE SCALE GENOMIC DNA]</scope>
    <source>
        <strain>MGAS8232</strain>
    </source>
</reference>
<dbReference type="EMBL" id="AE009949">
    <property type="protein sequence ID" value="AAL96899.1"/>
    <property type="molecule type" value="Genomic_DNA"/>
</dbReference>
<dbReference type="RefSeq" id="WP_000868345.1">
    <property type="nucleotide sequence ID" value="NC_003485.1"/>
</dbReference>
<dbReference type="SMR" id="P66305"/>
<dbReference type="GeneID" id="93860206"/>
<dbReference type="KEGG" id="spm:spyM18_0076"/>
<dbReference type="HOGENOM" id="CLU_135723_6_2_9"/>
<dbReference type="GO" id="GO:0005737">
    <property type="term" value="C:cytoplasm"/>
    <property type="evidence" value="ECO:0007669"/>
    <property type="project" value="UniProtKB-ARBA"/>
</dbReference>
<dbReference type="GO" id="GO:1990904">
    <property type="term" value="C:ribonucleoprotein complex"/>
    <property type="evidence" value="ECO:0007669"/>
    <property type="project" value="UniProtKB-KW"/>
</dbReference>
<dbReference type="GO" id="GO:0005840">
    <property type="term" value="C:ribosome"/>
    <property type="evidence" value="ECO:0007669"/>
    <property type="project" value="UniProtKB-KW"/>
</dbReference>
<dbReference type="GO" id="GO:0003735">
    <property type="term" value="F:structural constituent of ribosome"/>
    <property type="evidence" value="ECO:0007669"/>
    <property type="project" value="InterPro"/>
</dbReference>
<dbReference type="GO" id="GO:0006412">
    <property type="term" value="P:translation"/>
    <property type="evidence" value="ECO:0007669"/>
    <property type="project" value="UniProtKB-UniRule"/>
</dbReference>
<dbReference type="HAMAP" id="MF_00251">
    <property type="entry name" value="Ribosomal_bL36"/>
    <property type="match status" value="1"/>
</dbReference>
<dbReference type="InterPro" id="IPR000473">
    <property type="entry name" value="Ribosomal_bL36"/>
</dbReference>
<dbReference type="InterPro" id="IPR035977">
    <property type="entry name" value="Ribosomal_bL36_sp"/>
</dbReference>
<dbReference type="NCBIfam" id="TIGR01022">
    <property type="entry name" value="rpmJ_bact"/>
    <property type="match status" value="1"/>
</dbReference>
<dbReference type="PANTHER" id="PTHR42888">
    <property type="entry name" value="50S RIBOSOMAL PROTEIN L36, CHLOROPLASTIC"/>
    <property type="match status" value="1"/>
</dbReference>
<dbReference type="PANTHER" id="PTHR42888:SF1">
    <property type="entry name" value="LARGE RIBOSOMAL SUBUNIT PROTEIN BL36C"/>
    <property type="match status" value="1"/>
</dbReference>
<dbReference type="Pfam" id="PF00444">
    <property type="entry name" value="Ribosomal_L36"/>
    <property type="match status" value="1"/>
</dbReference>
<dbReference type="SUPFAM" id="SSF57840">
    <property type="entry name" value="Ribosomal protein L36"/>
    <property type="match status" value="1"/>
</dbReference>
<dbReference type="PROSITE" id="PS00828">
    <property type="entry name" value="RIBOSOMAL_L36"/>
    <property type="match status" value="1"/>
</dbReference>
<name>RL36_STRP8</name>
<organism>
    <name type="scientific">Streptococcus pyogenes serotype M18 (strain MGAS8232)</name>
    <dbReference type="NCBI Taxonomy" id="186103"/>
    <lineage>
        <taxon>Bacteria</taxon>
        <taxon>Bacillati</taxon>
        <taxon>Bacillota</taxon>
        <taxon>Bacilli</taxon>
        <taxon>Lactobacillales</taxon>
        <taxon>Streptococcaceae</taxon>
        <taxon>Streptococcus</taxon>
    </lineage>
</organism>
<proteinExistence type="inferred from homology"/>
<protein>
    <recommendedName>
        <fullName evidence="1">Large ribosomal subunit protein bL36</fullName>
    </recommendedName>
    <alternativeName>
        <fullName evidence="2">50S ribosomal protein L36</fullName>
    </alternativeName>
</protein>